<organism>
    <name type="scientific">Caenorhabditis elegans</name>
    <dbReference type="NCBI Taxonomy" id="6239"/>
    <lineage>
        <taxon>Eukaryota</taxon>
        <taxon>Metazoa</taxon>
        <taxon>Ecdysozoa</taxon>
        <taxon>Nematoda</taxon>
        <taxon>Chromadorea</taxon>
        <taxon>Rhabditida</taxon>
        <taxon>Rhabditina</taxon>
        <taxon>Rhabditomorpha</taxon>
        <taxon>Rhabditoidea</taxon>
        <taxon>Rhabditidae</taxon>
        <taxon>Peloderinae</taxon>
        <taxon>Caenorhabditis</taxon>
    </lineage>
</organism>
<evidence type="ECO:0000255" key="1"/>
<evidence type="ECO:0000269" key="2">
    <source>
    </source>
</evidence>
<evidence type="ECO:0000305" key="3"/>
<protein>
    <recommendedName>
        <fullName>Serpentine receptor class alpha-10</fullName>
        <shortName>Protein sra-10</shortName>
    </recommendedName>
</protein>
<name>SRA10_CAEEL</name>
<proteinExistence type="evidence at transcript level"/>
<feature type="chain" id="PRO_0000104476" description="Serpentine receptor class alpha-10">
    <location>
        <begin position="1"/>
        <end position="336"/>
    </location>
</feature>
<feature type="topological domain" description="Extracellular" evidence="1">
    <location>
        <begin position="1"/>
        <end position="28"/>
    </location>
</feature>
<feature type="transmembrane region" description="Helical; Name=1" evidence="1">
    <location>
        <begin position="29"/>
        <end position="49"/>
    </location>
</feature>
<feature type="topological domain" description="Cytoplasmic" evidence="1">
    <location>
        <begin position="50"/>
        <end position="61"/>
    </location>
</feature>
<feature type="transmembrane region" description="Helical; Name=2" evidence="1">
    <location>
        <begin position="62"/>
        <end position="82"/>
    </location>
</feature>
<feature type="topological domain" description="Extracellular" evidence="1">
    <location>
        <begin position="83"/>
        <end position="107"/>
    </location>
</feature>
<feature type="transmembrane region" description="Helical; Name=3" evidence="1">
    <location>
        <begin position="108"/>
        <end position="128"/>
    </location>
</feature>
<feature type="topological domain" description="Cytoplasmic" evidence="1">
    <location>
        <begin position="129"/>
        <end position="148"/>
    </location>
</feature>
<feature type="transmembrane region" description="Helical; Name=4" evidence="1">
    <location>
        <begin position="149"/>
        <end position="169"/>
    </location>
</feature>
<feature type="topological domain" description="Extracellular" evidence="1">
    <location>
        <begin position="170"/>
        <end position="192"/>
    </location>
</feature>
<feature type="transmembrane region" description="Helical; Name=5" evidence="1">
    <location>
        <begin position="193"/>
        <end position="213"/>
    </location>
</feature>
<feature type="topological domain" description="Cytoplasmic" evidence="1">
    <location>
        <begin position="214"/>
        <end position="243"/>
    </location>
</feature>
<feature type="transmembrane region" description="Helical; Name=6" evidence="1">
    <location>
        <begin position="244"/>
        <end position="264"/>
    </location>
</feature>
<feature type="topological domain" description="Extracellular" evidence="1">
    <location>
        <begin position="265"/>
        <end position="280"/>
    </location>
</feature>
<feature type="transmembrane region" description="Helical; Name=7" evidence="1">
    <location>
        <begin position="281"/>
        <end position="301"/>
    </location>
</feature>
<feature type="topological domain" description="Cytoplasmic" evidence="1">
    <location>
        <begin position="302"/>
        <end position="336"/>
    </location>
</feature>
<feature type="splice variant" id="VSP_020526" description="In isoform b." evidence="3">
    <location>
        <begin position="223"/>
        <end position="224"/>
    </location>
</feature>
<comment type="subcellular location">
    <subcellularLocation>
        <location evidence="3">Membrane</location>
        <topology evidence="3">Multi-pass membrane protein</topology>
    </subcellularLocation>
</comment>
<comment type="alternative products">
    <event type="alternative splicing"/>
    <isoform>
        <id>Q20405-1</id>
        <name>a</name>
        <sequence type="displayed"/>
    </isoform>
    <isoform>
        <id>Q20405-2</id>
        <name>b</name>
        <sequence type="described" ref="VSP_020526"/>
    </isoform>
</comment>
<comment type="tissue specificity">
    <text evidence="2">Expressed in the URX sensory neuron, the ALA interneuron and in additional interneurons, pharyngeal neurons and muscle.</text>
</comment>
<comment type="similarity">
    <text evidence="3">Belongs to the nematode receptor-like protein sra family.</text>
</comment>
<sequence>MGPITANSSKCATEDQMILQTSLLLRINVIIMTIVAIITFILTYKALFILKIRPIFHSSTKILLYTSLLFVNVHAVIFMVIQNTALIRSFTLSDKPCEIMRTTLECRFQNHVLIFGIAGVNFNQFGLTVDRLLATIIPQSYSHMGALPGVILSVLVVACSIAAPLIIAIGDPYDDIVPNCFFFPEHSAPRANIFLVTLSTLVITSIFLNFIIIYANKKLEKGCRTRFYVTQRYQKREALISTRIISYIAASQFLGLTLYSTMVLTLRLHKSMIPISIYHNMVWWAYTVPFAAVSLPALLIYRINQVGSNRKRVINRITAKVETQEEHMKSLKELWA</sequence>
<accession>Q20405</accession>
<accession>Q7JMP2</accession>
<dbReference type="EMBL" id="Z37092">
    <property type="protein sequence ID" value="CAA85456.1"/>
    <property type="molecule type" value="Genomic_DNA"/>
</dbReference>
<dbReference type="EMBL" id="Z37092">
    <property type="protein sequence ID" value="CAE46667.1"/>
    <property type="molecule type" value="Genomic_DNA"/>
</dbReference>
<dbReference type="PIR" id="T22187">
    <property type="entry name" value="T22187"/>
</dbReference>
<dbReference type="RefSeq" id="NP_001022162.1">
    <molecule id="Q20405-1"/>
    <property type="nucleotide sequence ID" value="NM_001026991.4"/>
</dbReference>
<dbReference type="RefSeq" id="NP_001022163.1">
    <molecule id="Q20405-2"/>
    <property type="nucleotide sequence ID" value="NM_001026992.3"/>
</dbReference>
<dbReference type="SMR" id="Q20405"/>
<dbReference type="FunCoup" id="Q20405">
    <property type="interactions" value="8"/>
</dbReference>
<dbReference type="PaxDb" id="6239-F44F4.5a"/>
<dbReference type="EnsemblMetazoa" id="F44F4.5a.1">
    <molecule id="Q20405-1"/>
    <property type="protein sequence ID" value="F44F4.5a.1"/>
    <property type="gene ID" value="WBGene00005036"/>
</dbReference>
<dbReference type="EnsemblMetazoa" id="F44F4.5b.1">
    <molecule id="Q20405-2"/>
    <property type="protein sequence ID" value="F44F4.5b.1"/>
    <property type="gene ID" value="WBGene00005036"/>
</dbReference>
<dbReference type="GeneID" id="191781"/>
<dbReference type="KEGG" id="cel:CELE_F44F4.5"/>
<dbReference type="UCSC" id="F44F4.5a">
    <molecule id="Q20405-1"/>
    <property type="organism name" value="c. elegans"/>
</dbReference>
<dbReference type="AGR" id="WB:WBGene00005036"/>
<dbReference type="CTD" id="191781"/>
<dbReference type="WormBase" id="F44F4.5a">
    <molecule id="Q20405-1"/>
    <property type="protein sequence ID" value="CE01001"/>
    <property type="gene ID" value="WBGene00005036"/>
    <property type="gene designation" value="sra-10"/>
</dbReference>
<dbReference type="WormBase" id="F44F4.5b">
    <molecule id="Q20405-2"/>
    <property type="protein sequence ID" value="CE35537"/>
    <property type="gene ID" value="WBGene00005036"/>
    <property type="gene designation" value="sra-10"/>
</dbReference>
<dbReference type="eggNOG" id="ENOG502THB2">
    <property type="taxonomic scope" value="Eukaryota"/>
</dbReference>
<dbReference type="GeneTree" id="ENSGT00970000195848"/>
<dbReference type="InParanoid" id="Q20405"/>
<dbReference type="OMA" id="CEIMRTT"/>
<dbReference type="OrthoDB" id="5801916at2759"/>
<dbReference type="PhylomeDB" id="Q20405"/>
<dbReference type="PRO" id="PR:Q20405"/>
<dbReference type="Proteomes" id="UP000001940">
    <property type="component" value="Chromosome II"/>
</dbReference>
<dbReference type="Bgee" id="WBGene00005036">
    <property type="expression patterns" value="Expressed in pharyngeal muscle cell (C elegans) and 3 other cell types or tissues"/>
</dbReference>
<dbReference type="GO" id="GO:0016020">
    <property type="term" value="C:membrane"/>
    <property type="evidence" value="ECO:0007669"/>
    <property type="project" value="UniProtKB-SubCell"/>
</dbReference>
<dbReference type="GO" id="GO:0004930">
    <property type="term" value="F:G protein-coupled receptor activity"/>
    <property type="evidence" value="ECO:0000304"/>
    <property type="project" value="UniProtKB"/>
</dbReference>
<dbReference type="GO" id="GO:0004984">
    <property type="term" value="F:olfactory receptor activity"/>
    <property type="evidence" value="ECO:0000318"/>
    <property type="project" value="GO_Central"/>
</dbReference>
<dbReference type="GO" id="GO:0050907">
    <property type="term" value="P:detection of chemical stimulus involved in sensory perception"/>
    <property type="evidence" value="ECO:0000318"/>
    <property type="project" value="GO_Central"/>
</dbReference>
<dbReference type="GO" id="GO:0007606">
    <property type="term" value="P:sensory perception of chemical stimulus"/>
    <property type="evidence" value="ECO:0000304"/>
    <property type="project" value="UniProtKB"/>
</dbReference>
<dbReference type="InterPro" id="IPR000344">
    <property type="entry name" value="7TM_GPCR_serpentine_rcpt_Sra"/>
</dbReference>
<dbReference type="InterPro" id="IPR051080">
    <property type="entry name" value="Nematode_rcpt-like_serp_alpha"/>
</dbReference>
<dbReference type="PANTHER" id="PTHR31357">
    <property type="entry name" value="SERPENTINE RECEPTOR CLASS ALPHA-10"/>
    <property type="match status" value="1"/>
</dbReference>
<dbReference type="PANTHER" id="PTHR31357:SF19">
    <property type="entry name" value="SERPENTINE RECEPTOR CLASS ALPHA-10"/>
    <property type="match status" value="1"/>
</dbReference>
<dbReference type="Pfam" id="PF02117">
    <property type="entry name" value="7TM_GPCR_Sra"/>
    <property type="match status" value="1"/>
</dbReference>
<dbReference type="PRINTS" id="PR00697">
    <property type="entry name" value="TMPROTEINSRA"/>
</dbReference>
<reference key="1">
    <citation type="journal article" date="1998" name="Science">
        <title>Genome sequence of the nematode C. elegans: a platform for investigating biology.</title>
        <authorList>
            <consortium name="The C. elegans sequencing consortium"/>
        </authorList>
    </citation>
    <scope>NUCLEOTIDE SEQUENCE [LARGE SCALE GENOMIC DNA]</scope>
    <scope>ALTERNATIVE SPLICING</scope>
    <source>
        <strain>Bristol N2</strain>
    </source>
</reference>
<reference key="2">
    <citation type="journal article" date="1995" name="Cell">
        <title>Divergent seven transmembrane receptors are candidate chemosensory receptors in C. elegans.</title>
        <authorList>
            <person name="Troemel E.R."/>
            <person name="Chou J.H."/>
            <person name="Dwyer N.D."/>
            <person name="Colbert H.A."/>
            <person name="Bargmann C.I."/>
        </authorList>
    </citation>
    <scope>TISSUE SPECIFICITY</scope>
</reference>
<keyword id="KW-0025">Alternative splicing</keyword>
<keyword id="KW-0472">Membrane</keyword>
<keyword id="KW-1185">Reference proteome</keyword>
<keyword id="KW-0812">Transmembrane</keyword>
<keyword id="KW-1133">Transmembrane helix</keyword>
<gene>
    <name type="primary">sra-10</name>
    <name type="ORF">F44F4.5</name>
</gene>